<feature type="chain" id="PRO_0000107015" description="Uncharacterized protein MJ0754">
    <location>
        <begin position="1"/>
        <end position="185"/>
    </location>
</feature>
<feature type="helix" evidence="1">
    <location>
        <begin position="15"/>
        <end position="42"/>
    </location>
</feature>
<feature type="helix" evidence="1">
    <location>
        <begin position="45"/>
        <end position="67"/>
    </location>
</feature>
<feature type="helix" evidence="1">
    <location>
        <begin position="85"/>
        <end position="98"/>
    </location>
</feature>
<feature type="helix" evidence="1">
    <location>
        <begin position="102"/>
        <end position="124"/>
    </location>
</feature>
<feature type="helix" evidence="1">
    <location>
        <begin position="130"/>
        <end position="156"/>
    </location>
</feature>
<feature type="strand" evidence="1">
    <location>
        <begin position="164"/>
        <end position="166"/>
    </location>
</feature>
<feature type="helix" evidence="1">
    <location>
        <begin position="168"/>
        <end position="175"/>
    </location>
</feature>
<organism>
    <name type="scientific">Methanocaldococcus jannaschii (strain ATCC 43067 / DSM 2661 / JAL-1 / JCM 10045 / NBRC 100440)</name>
    <name type="common">Methanococcus jannaschii</name>
    <dbReference type="NCBI Taxonomy" id="243232"/>
    <lineage>
        <taxon>Archaea</taxon>
        <taxon>Methanobacteriati</taxon>
        <taxon>Methanobacteriota</taxon>
        <taxon>Methanomada group</taxon>
        <taxon>Methanococci</taxon>
        <taxon>Methanococcales</taxon>
        <taxon>Methanocaldococcaceae</taxon>
        <taxon>Methanocaldococcus</taxon>
    </lineage>
</organism>
<reference key="1">
    <citation type="journal article" date="1996" name="Science">
        <title>Complete genome sequence of the methanogenic archaeon, Methanococcus jannaschii.</title>
        <authorList>
            <person name="Bult C.J."/>
            <person name="White O."/>
            <person name="Olsen G.J."/>
            <person name="Zhou L."/>
            <person name="Fleischmann R.D."/>
            <person name="Sutton G.G."/>
            <person name="Blake J.A."/>
            <person name="FitzGerald L.M."/>
            <person name="Clayton R.A."/>
            <person name="Gocayne J.D."/>
            <person name="Kerlavage A.R."/>
            <person name="Dougherty B.A."/>
            <person name="Tomb J.-F."/>
            <person name="Adams M.D."/>
            <person name="Reich C.I."/>
            <person name="Overbeek R."/>
            <person name="Kirkness E.F."/>
            <person name="Weinstock K.G."/>
            <person name="Merrick J.M."/>
            <person name="Glodek A."/>
            <person name="Scott J.L."/>
            <person name="Geoghagen N.S.M."/>
            <person name="Weidman J.F."/>
            <person name="Fuhrmann J.L."/>
            <person name="Nguyen D."/>
            <person name="Utterback T.R."/>
            <person name="Kelley J.M."/>
            <person name="Peterson J.D."/>
            <person name="Sadow P.W."/>
            <person name="Hanna M.C."/>
            <person name="Cotton M.D."/>
            <person name="Roberts K.M."/>
            <person name="Hurst M.A."/>
            <person name="Kaine B.P."/>
            <person name="Borodovsky M."/>
            <person name="Klenk H.-P."/>
            <person name="Fraser C.M."/>
            <person name="Smith H.O."/>
            <person name="Woese C.R."/>
            <person name="Venter J.C."/>
        </authorList>
    </citation>
    <scope>NUCLEOTIDE SEQUENCE [LARGE SCALE GENOMIC DNA]</scope>
    <source>
        <strain>ATCC 43067 / DSM 2661 / JAL-1 / JCM 10045 / NBRC 100440</strain>
    </source>
</reference>
<gene>
    <name type="ordered locus">MJ0754</name>
</gene>
<proteinExistence type="evidence at protein level"/>
<protein>
    <recommendedName>
        <fullName>Uncharacterized protein MJ0754</fullName>
    </recommendedName>
</protein>
<sequence length="185" mass="21766">MLEYISSLPKQPISEEEKEGLIEMREEEKLARDVYLTLYNKWKLQIFKNIAESEQTHMDAVKYLLEKYNIPDPVKNDSIGVFSNPKFEELYKKLVEKGDKSEVDALKVGATIEDLDIADLEKWINKTDNEDIKFVYENLMKGSRNHMRAFVRMLNNYGSNYTPQYISKEEYEEIISSSTERGMNR</sequence>
<name>Y754_METJA</name>
<evidence type="ECO:0007829" key="1">
    <source>
        <dbReference type="PDB" id="3Q4O"/>
    </source>
</evidence>
<accession>Q58164</accession>
<keyword id="KW-0002">3D-structure</keyword>
<keyword id="KW-1185">Reference proteome</keyword>
<dbReference type="EMBL" id="L77117">
    <property type="protein sequence ID" value="AAB98756.1"/>
    <property type="molecule type" value="Genomic_DNA"/>
</dbReference>
<dbReference type="PIR" id="B64394">
    <property type="entry name" value="B64394"/>
</dbReference>
<dbReference type="RefSeq" id="WP_010870259.1">
    <property type="nucleotide sequence ID" value="NC_000909.1"/>
</dbReference>
<dbReference type="PDB" id="3Q4N">
    <property type="method" value="X-ray"/>
    <property type="resolution" value="2.88 A"/>
    <property type="chains" value="A/B=1-185"/>
</dbReference>
<dbReference type="PDB" id="3Q4O">
    <property type="method" value="X-ray"/>
    <property type="resolution" value="1.34 A"/>
    <property type="chains" value="A=11-185"/>
</dbReference>
<dbReference type="PDB" id="3Q4Q">
    <property type="method" value="X-ray"/>
    <property type="resolution" value="1.75 A"/>
    <property type="chains" value="A=11-185"/>
</dbReference>
<dbReference type="PDB" id="3Q4R">
    <property type="method" value="X-ray"/>
    <property type="resolution" value="1.60 A"/>
    <property type="chains" value="A=11-185"/>
</dbReference>
<dbReference type="PDBsum" id="3Q4N"/>
<dbReference type="PDBsum" id="3Q4O"/>
<dbReference type="PDBsum" id="3Q4Q"/>
<dbReference type="PDBsum" id="3Q4R"/>
<dbReference type="SMR" id="Q58164"/>
<dbReference type="STRING" id="243232.MJ_0754"/>
<dbReference type="PaxDb" id="243232-MJ_0754"/>
<dbReference type="DNASU" id="1451631"/>
<dbReference type="EnsemblBacteria" id="AAB98756">
    <property type="protein sequence ID" value="AAB98756"/>
    <property type="gene ID" value="MJ_0754"/>
</dbReference>
<dbReference type="GeneID" id="1451631"/>
<dbReference type="KEGG" id="mja:MJ_0754"/>
<dbReference type="eggNOG" id="arCOG03957">
    <property type="taxonomic scope" value="Archaea"/>
</dbReference>
<dbReference type="HOGENOM" id="CLU_051317_1_2_2"/>
<dbReference type="InParanoid" id="Q58164"/>
<dbReference type="OrthoDB" id="117100at2157"/>
<dbReference type="PhylomeDB" id="Q58164"/>
<dbReference type="EvolutionaryTrace" id="Q58164"/>
<dbReference type="Proteomes" id="UP000000805">
    <property type="component" value="Chromosome"/>
</dbReference>
<dbReference type="CDD" id="cd01048">
    <property type="entry name" value="Ferritin_like_AB2"/>
    <property type="match status" value="1"/>
</dbReference>
<dbReference type="Gene3D" id="1.20.1260.10">
    <property type="match status" value="1"/>
</dbReference>
<dbReference type="InterPro" id="IPR019243">
    <property type="entry name" value="DUF2202"/>
</dbReference>
<dbReference type="InterPro" id="IPR012347">
    <property type="entry name" value="Ferritin-like"/>
</dbReference>
<dbReference type="InterPro" id="IPR009078">
    <property type="entry name" value="Ferritin-like_SF"/>
</dbReference>
<dbReference type="Pfam" id="PF09968">
    <property type="entry name" value="DUF2202"/>
    <property type="match status" value="1"/>
</dbReference>
<dbReference type="SUPFAM" id="SSF47240">
    <property type="entry name" value="Ferritin-like"/>
    <property type="match status" value="1"/>
</dbReference>